<name>MADS2_VITVI</name>
<sequence length="244" mass="27891">MGRGRVELKRIENKINRQVTFAKRRNGLLKKAYELSVLCDAEVALIIFSTRGKLYEFCSSSSMLKTLERYQKCSYGAVEVSRPSKELEQSSYREYLKLKSKFESLQRTQRNLLGEDLGPLNTKELEQLERQLETSLKQVRSTKTQFMLDQLSDLQNKEQVLVESNKALTRKLDEISVKNHLQLSWESGEQSMPYGHQQAQSQGFFQPLECNPTLQIGYNPAGSSQLSAPSNAQNVNGFIPGWML</sequence>
<protein>
    <recommendedName>
        <fullName evidence="8">Agamous-like MADS-box protein MADS2</fullName>
    </recommendedName>
    <alternativeName>
        <fullName evidence="7">MADS-box protein 2</fullName>
        <shortName evidence="7">VvMADS2</shortName>
    </alternativeName>
    <alternativeName>
        <fullName evidence="8">SEPALLATA homolog 1</fullName>
        <shortName evidence="5">VvSEP1</shortName>
        <shortName evidence="6">VviSEP1</shortName>
    </alternativeName>
</protein>
<feature type="chain" id="PRO_0000447290" description="Agamous-like MADS-box protein MADS2">
    <location>
        <begin position="1"/>
        <end position="244"/>
    </location>
</feature>
<feature type="domain" description="MADS-box" evidence="2">
    <location>
        <begin position="1"/>
        <end position="61"/>
    </location>
</feature>
<feature type="domain" description="K-box" evidence="3">
    <location>
        <begin position="88"/>
        <end position="178"/>
    </location>
</feature>
<feature type="splice variant" id="VSP_060174" description="In isoform 2.">
    <location>
        <position position="89"/>
    </location>
</feature>
<feature type="sequence conflict" description="In Ref. 1; AAM21342." ref="1">
    <original>S</original>
    <variation>A</variation>
    <location>
        <position position="104"/>
    </location>
</feature>
<reference key="1">
    <citation type="journal article" date="2002" name="Plant Sci.">
        <title>Cloning and characterization of grapevine (Vitis vinifera L.) MADS-box genes expressed during inflorescence and berry development.</title>
        <authorList>
            <person name="Boss P.K."/>
            <person name="Sensi E."/>
            <person name="Hua C."/>
            <person name="Davies C."/>
            <person name="Thomas M.R."/>
        </authorList>
    </citation>
    <scope>NUCLEOTIDE SEQUENCE [MRNA] (ISOFORM 1)</scope>
    <scope>TISSUE SPECIFICITY</scope>
    <source>
        <strain>cv. Cabernet Sauvignon</strain>
    </source>
</reference>
<reference key="2">
    <citation type="journal article" date="2007" name="Nature">
        <title>The grapevine genome sequence suggests ancestral hexaploidization in major angiosperm phyla.</title>
        <authorList>
            <person name="Jaillon O."/>
            <person name="Aury J.-M."/>
            <person name="Noel B."/>
            <person name="Policriti A."/>
            <person name="Clepet C."/>
            <person name="Casagrande A."/>
            <person name="Choisne N."/>
            <person name="Aubourg S."/>
            <person name="Vitulo N."/>
            <person name="Jubin C."/>
            <person name="Vezzi A."/>
            <person name="Legeai F."/>
            <person name="Hugueney P."/>
            <person name="Dasilva C."/>
            <person name="Horner D."/>
            <person name="Mica E."/>
            <person name="Jublot D."/>
            <person name="Poulain J."/>
            <person name="Bruyere C."/>
            <person name="Billault A."/>
            <person name="Segurens B."/>
            <person name="Gouyvenoux M."/>
            <person name="Ugarte E."/>
            <person name="Cattonaro F."/>
            <person name="Anthouard V."/>
            <person name="Vico V."/>
            <person name="Del Fabbro C."/>
            <person name="Alaux M."/>
            <person name="Di Gaspero G."/>
            <person name="Dumas V."/>
            <person name="Felice N."/>
            <person name="Paillard S."/>
            <person name="Juman I."/>
            <person name="Moroldo M."/>
            <person name="Scalabrin S."/>
            <person name="Canaguier A."/>
            <person name="Le Clainche I."/>
            <person name="Malacrida G."/>
            <person name="Durand E."/>
            <person name="Pesole G."/>
            <person name="Laucou V."/>
            <person name="Chatelet P."/>
            <person name="Merdinoglu D."/>
            <person name="Delledonne M."/>
            <person name="Pezzotti M."/>
            <person name="Lecharny A."/>
            <person name="Scarpelli C."/>
            <person name="Artiguenave F."/>
            <person name="Pe M.E."/>
            <person name="Valle G."/>
            <person name="Morgante M."/>
            <person name="Caboche M."/>
            <person name="Adam-Blondon A.-F."/>
            <person name="Weissenbach J."/>
            <person name="Quetier F."/>
            <person name="Wincker P."/>
        </authorList>
    </citation>
    <scope>NUCLEOTIDE SEQUENCE [LARGE SCALE GENOMIC DNA]</scope>
    <source>
        <strain>cv. Pinot noir / PN40024</strain>
    </source>
</reference>
<reference key="3">
    <citation type="journal article" date="2007" name="PLoS ONE">
        <title>A high quality draft consensus sequence of the genome of a heterozygous grapevine variety.</title>
        <authorList>
            <person name="Velasco R."/>
            <person name="Zharkikh A."/>
            <person name="Troggio M."/>
            <person name="Cartwright D.A."/>
            <person name="Cestaro A."/>
            <person name="Pruss D."/>
            <person name="Pindo M."/>
            <person name="FitzGerald L.M."/>
            <person name="Vezzulli S."/>
            <person name="Reid J."/>
            <person name="Malacarne G."/>
            <person name="Iliev D."/>
            <person name="Coppola G."/>
            <person name="Wardell B."/>
            <person name="Micheletti D."/>
            <person name="Macalma T."/>
            <person name="Facci M."/>
            <person name="Mitchell J.T."/>
            <person name="Perazzolli M."/>
            <person name="Eldredge G."/>
            <person name="Gatto P."/>
            <person name="Oyzerski R."/>
            <person name="Moretto M."/>
            <person name="Gutin N."/>
            <person name="Stefanini M."/>
            <person name="Chen Y."/>
            <person name="Segala C."/>
            <person name="Davenport C."/>
            <person name="Dematte L."/>
            <person name="Mraz A."/>
            <person name="Battilana J."/>
            <person name="Stormo K."/>
            <person name="Costa F."/>
            <person name="Tao Q."/>
            <person name="Si-Ammour A."/>
            <person name="Harkins T."/>
            <person name="Lackey A."/>
            <person name="Perbost C."/>
            <person name="Taillon B."/>
            <person name="Stella A."/>
            <person name="Solovyev V."/>
            <person name="Fawcett J.A."/>
            <person name="Sterck L."/>
            <person name="Vandepoele K."/>
            <person name="Grando S.M."/>
            <person name="Toppo S."/>
            <person name="Moser C."/>
            <person name="Lanchbury J."/>
            <person name="Bogden R."/>
            <person name="Skolnick M."/>
            <person name="Sgaramella V."/>
            <person name="Bhatnagar S.K."/>
            <person name="Fontana P."/>
            <person name="Gutin A."/>
            <person name="Van de Peer Y."/>
            <person name="Salamini F."/>
            <person name="Viola R."/>
        </authorList>
    </citation>
    <scope>NUCLEOTIDE SEQUENCE [LARGE SCALE GENOMIC DNA]</scope>
    <source>
        <strain>cv. Pinot noir</strain>
    </source>
</reference>
<reference key="4">
    <citation type="journal article" date="2009" name="Plant Physiol.">
        <title>Genome-wide analysis of MIKCC-type MADS box genes in grapevine.</title>
        <authorList>
            <person name="Diaz-Riquelme J."/>
            <person name="Lijavetzky D."/>
            <person name="Martinez-Zapater J.M."/>
            <person name="Carmona M.J."/>
        </authorList>
    </citation>
    <scope>GENE FAMILY</scope>
</reference>
<reference key="5">
    <citation type="journal article" date="2016" name="BMC Genomics">
        <title>Structural and functional annotation of the MADS-box transcription factor family in grapevine.</title>
        <authorList>
            <person name="Grimplet J."/>
            <person name="Martinez-Zapater J.M."/>
            <person name="Carmona M.J."/>
        </authorList>
    </citation>
    <scope>GENE FAMILY</scope>
</reference>
<proteinExistence type="evidence at transcript level"/>
<gene>
    <name evidence="7" type="primary">MADS2</name>
    <name evidence="9" type="ordered locus">VIT_14s0083g01050</name>
</gene>
<accession>Q8LLR2</accession>
<accession>A5BE01</accession>
<accession>D7SMN8</accession>
<evidence type="ECO:0000250" key="1">
    <source>
        <dbReference type="UniProtKB" id="Q0HA25"/>
    </source>
</evidence>
<evidence type="ECO:0000255" key="2">
    <source>
        <dbReference type="PROSITE-ProRule" id="PRU00251"/>
    </source>
</evidence>
<evidence type="ECO:0000255" key="3">
    <source>
        <dbReference type="PROSITE-ProRule" id="PRU00629"/>
    </source>
</evidence>
<evidence type="ECO:0000269" key="4">
    <source ref="1"/>
</evidence>
<evidence type="ECO:0000303" key="5">
    <source>
    </source>
</evidence>
<evidence type="ECO:0000303" key="6">
    <source>
    </source>
</evidence>
<evidence type="ECO:0000303" key="7">
    <source ref="1"/>
</evidence>
<evidence type="ECO:0000305" key="8"/>
<evidence type="ECO:0000312" key="9">
    <source>
        <dbReference type="EMBL" id="CBI16936.3"/>
    </source>
</evidence>
<dbReference type="EMBL" id="AF373601">
    <property type="protein sequence ID" value="AAM21342.1"/>
    <property type="molecule type" value="mRNA"/>
</dbReference>
<dbReference type="EMBL" id="FN594955">
    <property type="protein sequence ID" value="CBI16936.3"/>
    <property type="molecule type" value="Genomic_DNA"/>
</dbReference>
<dbReference type="EMBL" id="FN597038">
    <property type="status" value="NOT_ANNOTATED_CDS"/>
    <property type="molecule type" value="Genomic_DNA"/>
</dbReference>
<dbReference type="EMBL" id="AM456103">
    <property type="protein sequence ID" value="CAN59955.1"/>
    <property type="status" value="ALT_SEQ"/>
    <property type="molecule type" value="Genomic_DNA"/>
</dbReference>
<dbReference type="RefSeq" id="NP_001268109.1">
    <property type="nucleotide sequence ID" value="NM_001281180.1"/>
</dbReference>
<dbReference type="RefSeq" id="XP_019080193.1">
    <property type="nucleotide sequence ID" value="XM_019224648.1"/>
</dbReference>
<dbReference type="RefSeq" id="XP_019080194.1">
    <property type="nucleotide sequence ID" value="XM_019224649.1"/>
</dbReference>
<dbReference type="RefSeq" id="XP_059598310.1">
    <molecule id="Q8LLR2-1"/>
    <property type="nucleotide sequence ID" value="XM_059742327.1"/>
</dbReference>
<dbReference type="RefSeq" id="XP_059598311.1">
    <molecule id="Q8LLR2-2"/>
    <property type="nucleotide sequence ID" value="XM_059742328.1"/>
</dbReference>
<dbReference type="RefSeq" id="XP_059598312.1">
    <molecule id="Q8LLR2-2"/>
    <property type="nucleotide sequence ID" value="XM_059742329.1"/>
</dbReference>
<dbReference type="SMR" id="Q8LLR2"/>
<dbReference type="FunCoup" id="Q8LLR2">
    <property type="interactions" value="25"/>
</dbReference>
<dbReference type="STRING" id="29760.Q8LLR2"/>
<dbReference type="PaxDb" id="29760-VIT_14s0083g01050.t01"/>
<dbReference type="EnsemblPlants" id="Vitvi14g01344_t001">
    <molecule id="Q8LLR2-1"/>
    <property type="protein sequence ID" value="Vitvi14g01344_P001"/>
    <property type="gene ID" value="Vitvi14g01344"/>
</dbReference>
<dbReference type="GeneID" id="100232867"/>
<dbReference type="Gramene" id="Vitvi14g01344_t001">
    <molecule id="Q8LLR2-1"/>
    <property type="protein sequence ID" value="Vitvi14g01344_P001"/>
    <property type="gene ID" value="Vitvi14g01344"/>
</dbReference>
<dbReference type="eggNOG" id="KOG0014">
    <property type="taxonomic scope" value="Eukaryota"/>
</dbReference>
<dbReference type="HOGENOM" id="CLU_053053_0_2_1"/>
<dbReference type="InParanoid" id="Q8LLR2"/>
<dbReference type="OMA" id="KMWIEAN"/>
<dbReference type="OrthoDB" id="1898716at2759"/>
<dbReference type="Proteomes" id="UP000009183">
    <property type="component" value="Chromosome 14"/>
</dbReference>
<dbReference type="ExpressionAtlas" id="Q8LLR2">
    <property type="expression patterns" value="baseline and differential"/>
</dbReference>
<dbReference type="GO" id="GO:0005634">
    <property type="term" value="C:nucleus"/>
    <property type="evidence" value="ECO:0007669"/>
    <property type="project" value="UniProtKB-SubCell"/>
</dbReference>
<dbReference type="GO" id="GO:0000981">
    <property type="term" value="F:DNA-binding transcription factor activity, RNA polymerase II-specific"/>
    <property type="evidence" value="ECO:0000318"/>
    <property type="project" value="GO_Central"/>
</dbReference>
<dbReference type="GO" id="GO:0046983">
    <property type="term" value="F:protein dimerization activity"/>
    <property type="evidence" value="ECO:0007669"/>
    <property type="project" value="InterPro"/>
</dbReference>
<dbReference type="GO" id="GO:0000978">
    <property type="term" value="F:RNA polymerase II cis-regulatory region sequence-specific DNA binding"/>
    <property type="evidence" value="ECO:0000318"/>
    <property type="project" value="GO_Central"/>
</dbReference>
<dbReference type="GO" id="GO:0009908">
    <property type="term" value="P:flower development"/>
    <property type="evidence" value="ECO:0007669"/>
    <property type="project" value="UniProtKB-KW"/>
</dbReference>
<dbReference type="GO" id="GO:0045944">
    <property type="term" value="P:positive regulation of transcription by RNA polymerase II"/>
    <property type="evidence" value="ECO:0007669"/>
    <property type="project" value="InterPro"/>
</dbReference>
<dbReference type="GO" id="GO:0006357">
    <property type="term" value="P:regulation of transcription by RNA polymerase II"/>
    <property type="evidence" value="ECO:0000318"/>
    <property type="project" value="GO_Central"/>
</dbReference>
<dbReference type="CDD" id="cd00265">
    <property type="entry name" value="MADS_MEF2_like"/>
    <property type="match status" value="1"/>
</dbReference>
<dbReference type="FunFam" id="3.40.1810.10:FF:000004">
    <property type="entry name" value="MADS-box transcription factor 1"/>
    <property type="match status" value="1"/>
</dbReference>
<dbReference type="Gene3D" id="3.40.1810.10">
    <property type="entry name" value="Transcription factor, MADS-box"/>
    <property type="match status" value="1"/>
</dbReference>
<dbReference type="InterPro" id="IPR050142">
    <property type="entry name" value="MADS-box/MEF2_TF"/>
</dbReference>
<dbReference type="InterPro" id="IPR033896">
    <property type="entry name" value="MEF2-like_N"/>
</dbReference>
<dbReference type="InterPro" id="IPR002487">
    <property type="entry name" value="TF_Kbox"/>
</dbReference>
<dbReference type="InterPro" id="IPR002100">
    <property type="entry name" value="TF_MADSbox"/>
</dbReference>
<dbReference type="InterPro" id="IPR036879">
    <property type="entry name" value="TF_MADSbox_sf"/>
</dbReference>
<dbReference type="PANTHER" id="PTHR48019">
    <property type="entry name" value="SERUM RESPONSE FACTOR HOMOLOG"/>
    <property type="match status" value="1"/>
</dbReference>
<dbReference type="Pfam" id="PF01486">
    <property type="entry name" value="K-box"/>
    <property type="match status" value="1"/>
</dbReference>
<dbReference type="Pfam" id="PF00319">
    <property type="entry name" value="SRF-TF"/>
    <property type="match status" value="1"/>
</dbReference>
<dbReference type="PRINTS" id="PR00404">
    <property type="entry name" value="MADSDOMAIN"/>
</dbReference>
<dbReference type="SMART" id="SM00432">
    <property type="entry name" value="MADS"/>
    <property type="match status" value="1"/>
</dbReference>
<dbReference type="SUPFAM" id="SSF55455">
    <property type="entry name" value="SRF-like"/>
    <property type="match status" value="1"/>
</dbReference>
<dbReference type="PROSITE" id="PS51297">
    <property type="entry name" value="K_BOX"/>
    <property type="match status" value="1"/>
</dbReference>
<dbReference type="PROSITE" id="PS00350">
    <property type="entry name" value="MADS_BOX_1"/>
    <property type="match status" value="1"/>
</dbReference>
<dbReference type="PROSITE" id="PS50066">
    <property type="entry name" value="MADS_BOX_2"/>
    <property type="match status" value="1"/>
</dbReference>
<organism>
    <name type="scientific">Vitis vinifera</name>
    <name type="common">Grape</name>
    <dbReference type="NCBI Taxonomy" id="29760"/>
    <lineage>
        <taxon>Eukaryota</taxon>
        <taxon>Viridiplantae</taxon>
        <taxon>Streptophyta</taxon>
        <taxon>Embryophyta</taxon>
        <taxon>Tracheophyta</taxon>
        <taxon>Spermatophyta</taxon>
        <taxon>Magnoliopsida</taxon>
        <taxon>eudicotyledons</taxon>
        <taxon>Gunneridae</taxon>
        <taxon>Pentapetalae</taxon>
        <taxon>rosids</taxon>
        <taxon>Vitales</taxon>
        <taxon>Vitaceae</taxon>
        <taxon>Viteae</taxon>
        <taxon>Vitis</taxon>
    </lineage>
</organism>
<comment type="function">
    <text evidence="1">Probable transcription factor involved in flower development.</text>
</comment>
<comment type="subcellular location">
    <subcellularLocation>
        <location evidence="2">Nucleus</location>
    </subcellularLocation>
</comment>
<comment type="alternative products">
    <event type="alternative splicing"/>
    <isoform>
        <id>Q8LLR2-1</id>
        <name>1</name>
        <sequence type="displayed"/>
    </isoform>
    <isoform>
        <id>Q8LLR2-2</id>
        <name>2</name>
        <sequence type="described" ref="VSP_060174"/>
    </isoform>
</comment>
<comment type="tissue specificity">
    <text evidence="4">Expressed in flowers and seeds.</text>
</comment>
<comment type="sequence caution" evidence="8">
    <conflict type="erroneous gene model prediction">
        <sequence resource="EMBL-CDS" id="CAN59955"/>
    </conflict>
</comment>
<keyword id="KW-0025">Alternative splicing</keyword>
<keyword id="KW-0238">DNA-binding</keyword>
<keyword id="KW-0287">Flowering</keyword>
<keyword id="KW-0539">Nucleus</keyword>
<keyword id="KW-1185">Reference proteome</keyword>
<keyword id="KW-0804">Transcription</keyword>
<keyword id="KW-0805">Transcription regulation</keyword>